<dbReference type="EC" id="6.2.1.-" evidence="2"/>
<dbReference type="EMBL" id="ADCP02000001">
    <property type="protein sequence ID" value="EFV43627.1"/>
    <property type="molecule type" value="Genomic_DNA"/>
</dbReference>
<dbReference type="RefSeq" id="WP_005028462.1">
    <property type="nucleotide sequence ID" value="NZ_KE150238.1"/>
</dbReference>
<dbReference type="SMR" id="E5Y8P8"/>
<dbReference type="STRING" id="563192.HMPREF0179_02566"/>
<dbReference type="GeneID" id="78085695"/>
<dbReference type="eggNOG" id="COG0045">
    <property type="taxonomic scope" value="Bacteria"/>
</dbReference>
<dbReference type="HOGENOM" id="CLU_037430_4_0_7"/>
<dbReference type="OrthoDB" id="9802602at2"/>
<dbReference type="Proteomes" id="UP000006034">
    <property type="component" value="Unassembled WGS sequence"/>
</dbReference>
<dbReference type="GO" id="GO:0042709">
    <property type="term" value="C:succinate-CoA ligase complex"/>
    <property type="evidence" value="ECO:0007669"/>
    <property type="project" value="TreeGrafter"/>
</dbReference>
<dbReference type="GO" id="GO:0005524">
    <property type="term" value="F:ATP binding"/>
    <property type="evidence" value="ECO:0007669"/>
    <property type="project" value="UniProtKB-KW"/>
</dbReference>
<dbReference type="GO" id="GO:0046872">
    <property type="term" value="F:metal ion binding"/>
    <property type="evidence" value="ECO:0007669"/>
    <property type="project" value="UniProtKB-KW"/>
</dbReference>
<dbReference type="GO" id="GO:0004775">
    <property type="term" value="F:succinate-CoA ligase (ADP-forming) activity"/>
    <property type="evidence" value="ECO:0007669"/>
    <property type="project" value="TreeGrafter"/>
</dbReference>
<dbReference type="GO" id="GO:0006104">
    <property type="term" value="P:succinyl-CoA metabolic process"/>
    <property type="evidence" value="ECO:0007669"/>
    <property type="project" value="TreeGrafter"/>
</dbReference>
<dbReference type="GO" id="GO:0006099">
    <property type="term" value="P:tricarboxylic acid cycle"/>
    <property type="evidence" value="ECO:0007669"/>
    <property type="project" value="InterPro"/>
</dbReference>
<dbReference type="FunFam" id="3.30.470.20:FF:000002">
    <property type="entry name" value="Succinate--CoA ligase [ADP-forming] subunit beta"/>
    <property type="match status" value="1"/>
</dbReference>
<dbReference type="Gene3D" id="3.30.1490.20">
    <property type="entry name" value="ATP-grasp fold, A domain"/>
    <property type="match status" value="1"/>
</dbReference>
<dbReference type="Gene3D" id="3.30.470.20">
    <property type="entry name" value="ATP-grasp fold, B domain"/>
    <property type="match status" value="1"/>
</dbReference>
<dbReference type="Gene3D" id="3.40.50.261">
    <property type="entry name" value="Succinyl-CoA synthetase domains"/>
    <property type="match status" value="1"/>
</dbReference>
<dbReference type="InterPro" id="IPR011761">
    <property type="entry name" value="ATP-grasp"/>
</dbReference>
<dbReference type="InterPro" id="IPR013650">
    <property type="entry name" value="ATP-grasp_succ-CoA_synth-type"/>
</dbReference>
<dbReference type="InterPro" id="IPR013815">
    <property type="entry name" value="ATP_grasp_subdomain_1"/>
</dbReference>
<dbReference type="InterPro" id="IPR017866">
    <property type="entry name" value="Succ-CoA_synthase_bsu_CS"/>
</dbReference>
<dbReference type="InterPro" id="IPR005811">
    <property type="entry name" value="SUCC_ACL_C"/>
</dbReference>
<dbReference type="InterPro" id="IPR005809">
    <property type="entry name" value="Succ_CoA_ligase-like_bsu"/>
</dbReference>
<dbReference type="InterPro" id="IPR016102">
    <property type="entry name" value="Succinyl-CoA_synth-like"/>
</dbReference>
<dbReference type="PANTHER" id="PTHR11815:SF10">
    <property type="entry name" value="SUCCINATE--COA LIGASE [GDP-FORMING] SUBUNIT BETA, MITOCHONDRIAL"/>
    <property type="match status" value="1"/>
</dbReference>
<dbReference type="PANTHER" id="PTHR11815">
    <property type="entry name" value="SUCCINYL-COA SYNTHETASE BETA CHAIN"/>
    <property type="match status" value="1"/>
</dbReference>
<dbReference type="Pfam" id="PF08442">
    <property type="entry name" value="ATP-grasp_2"/>
    <property type="match status" value="1"/>
</dbReference>
<dbReference type="Pfam" id="PF00549">
    <property type="entry name" value="Ligase_CoA"/>
    <property type="match status" value="1"/>
</dbReference>
<dbReference type="PIRSF" id="PIRSF001554">
    <property type="entry name" value="SucCS_beta"/>
    <property type="match status" value="1"/>
</dbReference>
<dbReference type="SUPFAM" id="SSF56059">
    <property type="entry name" value="Glutathione synthetase ATP-binding domain-like"/>
    <property type="match status" value="1"/>
</dbReference>
<dbReference type="SUPFAM" id="SSF52210">
    <property type="entry name" value="Succinyl-CoA synthetase domains"/>
    <property type="match status" value="1"/>
</dbReference>
<dbReference type="PROSITE" id="PS50975">
    <property type="entry name" value="ATP_GRASP"/>
    <property type="match status" value="1"/>
</dbReference>
<dbReference type="PROSITE" id="PS01217">
    <property type="entry name" value="SUCCINYL_COA_LIG_3"/>
    <property type="match status" value="1"/>
</dbReference>
<proteinExistence type="evidence at protein level"/>
<sequence>MKLFEYQAKEAFREKGLPTPKGVLVRGMDELDGAFAEVGFPCVLKSQVLSGGRGKAGLIKVVKDAESAKATAKTLFESEHNVRMLLVEEAVDIDREIYLSITVDPVESKIMLIGCAEGGVEIEKLAATDPDKIVTVRVDIAEGLGGYHVNNLTYGMGLSGDLGKQVGAVVRGLYKTFRAYDAQLAEINPLFITKDGKAIAGDGKLIIDDNSVWRQPSYPLTRDYFDSEVEFEAAQEGIPYLQFNGDIALMCAGAGLTTTVFDLINDAGGHPATYVEFGGANYTKAVRTMELCLKTPSKVILVVTFGTIARADVMAQGLVEAIKAHQPKQPIVTCIRGTNEEEAFAILRDAGLEPLTNTEEAVQRAVDIAAGRA</sequence>
<gene>
    <name evidence="3" type="primary">sauC</name>
    <name evidence="6" type="ORF">HMPREF0179_02566</name>
</gene>
<name>SAUC_BILW3</name>
<keyword id="KW-0067">ATP-binding</keyword>
<keyword id="KW-0436">Ligase</keyword>
<keyword id="KW-0460">Magnesium</keyword>
<keyword id="KW-0479">Metal-binding</keyword>
<keyword id="KW-0547">Nucleotide-binding</keyword>
<keyword id="KW-1185">Reference proteome</keyword>
<comment type="function">
    <text evidence="2">Involved in the degradation of sulfoacetate (PubMed:37414148). Catalyzes the CoA- and ATP-dependent conversion of sulfoacetate to sulfoacetyl-CoA and ADP (PubMed:37414148). Cannot use other sulfonic and carboxylic acids, and shows only residual activity with 3-sulfopropanoate and malonic acid (PubMed:37414148).</text>
</comment>
<comment type="catalytic activity">
    <reaction evidence="2">
        <text>sulfoacetate + ATP + CoA = sulfoacetyl-CoA + ADP + phosphate</text>
        <dbReference type="Rhea" id="RHEA:76683"/>
        <dbReference type="ChEBI" id="CHEBI:30616"/>
        <dbReference type="ChEBI" id="CHEBI:43474"/>
        <dbReference type="ChEBI" id="CHEBI:57287"/>
        <dbReference type="ChEBI" id="CHEBI:58824"/>
        <dbReference type="ChEBI" id="CHEBI:61994"/>
        <dbReference type="ChEBI" id="CHEBI:456216"/>
    </reaction>
    <physiologicalReaction direction="left-to-right" evidence="2">
        <dbReference type="Rhea" id="RHEA:76684"/>
    </physiologicalReaction>
</comment>
<comment type="cofactor">
    <cofactor evidence="2">
        <name>Mg(2+)</name>
        <dbReference type="ChEBI" id="CHEBI:18420"/>
    </cofactor>
    <text evidence="1">Binds 1 Mg(2+) ion per subunit.</text>
</comment>
<comment type="biophysicochemical properties">
    <kinetics>
        <KM evidence="2">1.07 mM for sulfoacetate</KM>
        <KM evidence="2">0.05 mM for ATP</KM>
        <KM evidence="2">0.008 mM for CoA</KM>
        <text evidence="2">kcat is 1.90 sec(-1) with sulfoacetate as substrate. kcat is 2.30 sec(-1) with ATP as substrate. kcat is 2.14 sec(-1) with CoA as substrate.</text>
    </kinetics>
    <phDependence>
        <text evidence="2">Optimum pH is 7.5.</text>
    </phDependence>
</comment>
<comment type="subunit">
    <text evidence="5">Forms a complex with SauD.</text>
</comment>
<comment type="induction">
    <text evidence="2">Induced in sulfoacetate-grown cells but not in thiosulfate-grown cells.</text>
</comment>
<comment type="similarity">
    <text evidence="4">Belongs to the succinate/malate CoA ligase beta subunit family.</text>
</comment>
<accession>E5Y8P8</accession>
<feature type="chain" id="PRO_0000459624" description="ADP-forming sulfoacetate-CoA ligase subunit SauC">
    <location>
        <begin position="1"/>
        <end position="373"/>
    </location>
</feature>
<feature type="domain" description="ATP-grasp" evidence="1">
    <location>
        <begin position="9"/>
        <end position="249"/>
    </location>
</feature>
<feature type="binding site" evidence="1">
    <location>
        <begin position="35"/>
        <end position="97"/>
    </location>
    <ligand>
        <name>ATP</name>
        <dbReference type="ChEBI" id="CHEBI:30616"/>
    </ligand>
</feature>
<feature type="binding site" evidence="1">
    <location>
        <position position="186"/>
    </location>
    <ligand>
        <name>Mg(2+)</name>
        <dbReference type="ChEBI" id="CHEBI:18420"/>
    </ligand>
</feature>
<feature type="binding site" evidence="1">
    <location>
        <position position="188"/>
    </location>
    <ligand>
        <name>Mg(2+)</name>
        <dbReference type="ChEBI" id="CHEBI:18420"/>
    </ligand>
</feature>
<evidence type="ECO:0000255" key="1">
    <source>
        <dbReference type="PROSITE-ProRule" id="PRU00409"/>
    </source>
</evidence>
<evidence type="ECO:0000269" key="2">
    <source>
    </source>
</evidence>
<evidence type="ECO:0000303" key="3">
    <source>
    </source>
</evidence>
<evidence type="ECO:0000305" key="4"/>
<evidence type="ECO:0000305" key="5">
    <source>
    </source>
</evidence>
<evidence type="ECO:0000312" key="6">
    <source>
        <dbReference type="EMBL" id="EFV43627.1"/>
    </source>
</evidence>
<protein>
    <recommendedName>
        <fullName evidence="3">ADP-forming sulfoacetate-CoA ligase subunit SauC</fullName>
        <ecNumber evidence="2">6.2.1.-</ecNumber>
    </recommendedName>
</protein>
<reference key="1">
    <citation type="submission" date="2013-04" db="EMBL/GenBank/DDBJ databases">
        <title>The Genome Sequence of Bilophila wadsworthia 3_1_6.</title>
        <authorList>
            <consortium name="The Broad Institute Genomics Platform"/>
            <person name="Earl A."/>
            <person name="Ward D."/>
            <person name="Feldgarden M."/>
            <person name="Gevers D."/>
            <person name="Sibley C."/>
            <person name="Strauss J."/>
            <person name="Allen-Vercoe E."/>
            <person name="Walker B."/>
            <person name="Young S."/>
            <person name="Zeng Q."/>
            <person name="Gargeya S."/>
            <person name="Fitzgerald M."/>
            <person name="Haas B."/>
            <person name="Abouelleil A."/>
            <person name="Allen A.W."/>
            <person name="Alvarado L."/>
            <person name="Arachchi H.M."/>
            <person name="Berlin A.M."/>
            <person name="Chapman S.B."/>
            <person name="Gainer-Dewar J."/>
            <person name="Goldberg J."/>
            <person name="Griggs A."/>
            <person name="Gujja S."/>
            <person name="Hansen M."/>
            <person name="Howarth C."/>
            <person name="Imamovic A."/>
            <person name="Ireland A."/>
            <person name="Larimer J."/>
            <person name="McCowan C."/>
            <person name="Murphy C."/>
            <person name="Pearson M."/>
            <person name="Poon T.W."/>
            <person name="Priest M."/>
            <person name="Roberts A."/>
            <person name="Saif S."/>
            <person name="Shea T."/>
            <person name="Sisk P."/>
            <person name="Sykes S."/>
            <person name="Wortman J."/>
            <person name="Nusbaum C."/>
            <person name="Birren B."/>
        </authorList>
    </citation>
    <scope>NUCLEOTIDE SEQUENCE [LARGE SCALE GENOMIC DNA]</scope>
    <source>
        <strain>3_1_6</strain>
    </source>
</reference>
<reference key="2">
    <citation type="journal article" date="2023" name="J. Biol. Chem.">
        <title>Isethionate is an intermediate in the degradation of sulfoacetate by the human gut pathobiont Bilophila wadsworthia.</title>
        <authorList>
            <person name="Liu X."/>
            <person name="Wei Y."/>
            <person name="Zhang J."/>
            <person name="Zhou Y."/>
            <person name="Du Y."/>
            <person name="Zhang Y."/>
        </authorList>
    </citation>
    <scope>FUNCTION</scope>
    <scope>CATALYTIC ACTIVITY</scope>
    <scope>COFACTOR</scope>
    <scope>BIOPHYSICOCHEMICAL PROPERTIES</scope>
    <scope>INDUCTION</scope>
    <source>
        <strain>3_1_6</strain>
    </source>
</reference>
<organism>
    <name type="scientific">Bilophila wadsworthia (strain 3_1_6)</name>
    <dbReference type="NCBI Taxonomy" id="563192"/>
    <lineage>
        <taxon>Bacteria</taxon>
        <taxon>Pseudomonadati</taxon>
        <taxon>Thermodesulfobacteriota</taxon>
        <taxon>Desulfovibrionia</taxon>
        <taxon>Desulfovibrionales</taxon>
        <taxon>Desulfovibrionaceae</taxon>
        <taxon>Bilophila</taxon>
    </lineage>
</organism>